<sequence>MPDELRAEKSFQSKPYDSLKNKSEFDRVYQKGFKKHNLFFSLFVLDLSKEPPKGKEGFKDPLSCRLKDKKTLYLLGLSVSKKVGNAVKRNLIKRRLRSLTLKHAALCQGLALVFVPRSDCYHLDFWALEKHFLEMLTSIKNYIEQSLKRLEKRNNSYLCETIKRLF</sequence>
<comment type="function">
    <text evidence="1">RNaseP catalyzes the removal of the 5'-leader sequence from pre-tRNA to produce the mature 5'-terminus. It can also cleave other RNA substrates such as 4.5S RNA. The protein component plays an auxiliary but essential role in vivo by binding to the 5'-leader sequence and broadening the substrate specificity of the ribozyme.</text>
</comment>
<comment type="catalytic activity">
    <reaction evidence="1">
        <text>Endonucleolytic cleavage of RNA, removing 5'-extranucleotides from tRNA precursor.</text>
        <dbReference type="EC" id="3.1.26.5"/>
    </reaction>
</comment>
<comment type="subunit">
    <text evidence="1">Consists of a catalytic RNA component (M1 or rnpB) and a protein subunit.</text>
</comment>
<comment type="similarity">
    <text evidence="1">Belongs to the RnpA family.</text>
</comment>
<proteinExistence type="inferred from homology"/>
<gene>
    <name evidence="1" type="primary">rnpA</name>
    <name type="ordered locus">HPAG1_1374</name>
</gene>
<keyword id="KW-0255">Endonuclease</keyword>
<keyword id="KW-0378">Hydrolase</keyword>
<keyword id="KW-0540">Nuclease</keyword>
<keyword id="KW-0694">RNA-binding</keyword>
<keyword id="KW-0819">tRNA processing</keyword>
<name>RNPA_HELPH</name>
<reference key="1">
    <citation type="journal article" date="2006" name="Proc. Natl. Acad. Sci. U.S.A.">
        <title>The complete genome sequence of a chronic atrophic gastritis Helicobacter pylori strain: evolution during disease progression.</title>
        <authorList>
            <person name="Oh J.D."/>
            <person name="Kling-Baeckhed H."/>
            <person name="Giannakis M."/>
            <person name="Xu J."/>
            <person name="Fulton R.S."/>
            <person name="Fulton L.A."/>
            <person name="Cordum H.S."/>
            <person name="Wang C."/>
            <person name="Elliott G."/>
            <person name="Edwards J."/>
            <person name="Mardis E.R."/>
            <person name="Engstrand L.G."/>
            <person name="Gordon J.I."/>
        </authorList>
    </citation>
    <scope>NUCLEOTIDE SEQUENCE [LARGE SCALE GENOMIC DNA]</scope>
    <source>
        <strain>HPAG1</strain>
    </source>
</reference>
<protein>
    <recommendedName>
        <fullName evidence="1">Ribonuclease P protein component</fullName>
        <shortName evidence="1">RNase P protein</shortName>
        <shortName evidence="1">RNaseP protein</shortName>
        <ecNumber evidence="1">3.1.26.5</ecNumber>
    </recommendedName>
    <alternativeName>
        <fullName evidence="1">Protein C5</fullName>
    </alternativeName>
</protein>
<dbReference type="EC" id="3.1.26.5" evidence="1"/>
<dbReference type="EMBL" id="CP000241">
    <property type="protein sequence ID" value="ABF85441.1"/>
    <property type="molecule type" value="Genomic_DNA"/>
</dbReference>
<dbReference type="SMR" id="Q1CRI1"/>
<dbReference type="KEGG" id="hpa:HPAG1_1374"/>
<dbReference type="HOGENOM" id="CLU_117179_9_3_7"/>
<dbReference type="GO" id="GO:0030677">
    <property type="term" value="C:ribonuclease P complex"/>
    <property type="evidence" value="ECO:0007669"/>
    <property type="project" value="TreeGrafter"/>
</dbReference>
<dbReference type="GO" id="GO:0042781">
    <property type="term" value="F:3'-tRNA processing endoribonuclease activity"/>
    <property type="evidence" value="ECO:0007669"/>
    <property type="project" value="TreeGrafter"/>
</dbReference>
<dbReference type="GO" id="GO:0004526">
    <property type="term" value="F:ribonuclease P activity"/>
    <property type="evidence" value="ECO:0007669"/>
    <property type="project" value="UniProtKB-UniRule"/>
</dbReference>
<dbReference type="GO" id="GO:0000049">
    <property type="term" value="F:tRNA binding"/>
    <property type="evidence" value="ECO:0007669"/>
    <property type="project" value="UniProtKB-UniRule"/>
</dbReference>
<dbReference type="GO" id="GO:0001682">
    <property type="term" value="P:tRNA 5'-leader removal"/>
    <property type="evidence" value="ECO:0007669"/>
    <property type="project" value="UniProtKB-UniRule"/>
</dbReference>
<dbReference type="Gene3D" id="3.30.230.10">
    <property type="match status" value="1"/>
</dbReference>
<dbReference type="HAMAP" id="MF_00227">
    <property type="entry name" value="RNase_P"/>
    <property type="match status" value="1"/>
</dbReference>
<dbReference type="InterPro" id="IPR020568">
    <property type="entry name" value="Ribosomal_Su5_D2-typ_SF"/>
</dbReference>
<dbReference type="InterPro" id="IPR014721">
    <property type="entry name" value="Ribsml_uS5_D2-typ_fold_subgr"/>
</dbReference>
<dbReference type="InterPro" id="IPR000100">
    <property type="entry name" value="RNase_P"/>
</dbReference>
<dbReference type="InterPro" id="IPR020539">
    <property type="entry name" value="RNase_P_CS"/>
</dbReference>
<dbReference type="NCBIfam" id="TIGR00188">
    <property type="entry name" value="rnpA"/>
    <property type="match status" value="1"/>
</dbReference>
<dbReference type="PANTHER" id="PTHR33992">
    <property type="entry name" value="RIBONUCLEASE P PROTEIN COMPONENT"/>
    <property type="match status" value="1"/>
</dbReference>
<dbReference type="PANTHER" id="PTHR33992:SF1">
    <property type="entry name" value="RIBONUCLEASE P PROTEIN COMPONENT"/>
    <property type="match status" value="1"/>
</dbReference>
<dbReference type="Pfam" id="PF00825">
    <property type="entry name" value="Ribonuclease_P"/>
    <property type="match status" value="1"/>
</dbReference>
<dbReference type="SUPFAM" id="SSF54211">
    <property type="entry name" value="Ribosomal protein S5 domain 2-like"/>
    <property type="match status" value="1"/>
</dbReference>
<dbReference type="PROSITE" id="PS00648">
    <property type="entry name" value="RIBONUCLEASE_P"/>
    <property type="match status" value="1"/>
</dbReference>
<accession>Q1CRI1</accession>
<feature type="chain" id="PRO_1000021414" description="Ribonuclease P protein component">
    <location>
        <begin position="1"/>
        <end position="166"/>
    </location>
</feature>
<organism>
    <name type="scientific">Helicobacter pylori (strain HPAG1)</name>
    <dbReference type="NCBI Taxonomy" id="357544"/>
    <lineage>
        <taxon>Bacteria</taxon>
        <taxon>Pseudomonadati</taxon>
        <taxon>Campylobacterota</taxon>
        <taxon>Epsilonproteobacteria</taxon>
        <taxon>Campylobacterales</taxon>
        <taxon>Helicobacteraceae</taxon>
        <taxon>Helicobacter</taxon>
    </lineage>
</organism>
<evidence type="ECO:0000255" key="1">
    <source>
        <dbReference type="HAMAP-Rule" id="MF_00227"/>
    </source>
</evidence>